<proteinExistence type="inferred from homology"/>
<sequence>MAAEIICVGTELLLGDIVNTNAQYLALELAKLGIPHYYQTVVGDNVERLKKAIAIARERSSILIFTGGLGPTPDDLTTETIADFFQTSLREDQEILAEIEAKFTSLGREMPPSNSKQALIPMGADFLPNPTGTAPGMIWQPEANVTILTFPGVPSEMKRMWVETAIPYLESQGWGKERIYSRYLKFRGIGESALAEKVAHLFDLTNPTVAPYASLGEVRLRIATKAPSLEAALQVIEPVATEIKEIAGLDYFGADDDTLPAVVGELLRWQKQTLSVAESCTGGGLGEIITQIAGSSDYFGGGVISYDNRVKVALLDVNEGDLNNFGAVSAIVAQQMALGVQKRLATDWGISITGIAGPGGGSETKPVGLVYIGLASPEGNVTVSEHRFGENRDRLTIRQISAYTALDRLRRNLLIMS</sequence>
<gene>
    <name type="ordered locus">MAE_16790</name>
</gene>
<protein>
    <recommendedName>
        <fullName evidence="1">CinA-like protein</fullName>
    </recommendedName>
</protein>
<name>CINAL_MICAN</name>
<comment type="similarity">
    <text evidence="1">Belongs to the CinA family.</text>
</comment>
<organism>
    <name type="scientific">Microcystis aeruginosa (strain NIES-843 / IAM M-2473)</name>
    <dbReference type="NCBI Taxonomy" id="449447"/>
    <lineage>
        <taxon>Bacteria</taxon>
        <taxon>Bacillati</taxon>
        <taxon>Cyanobacteriota</taxon>
        <taxon>Cyanophyceae</taxon>
        <taxon>Oscillatoriophycideae</taxon>
        <taxon>Chroococcales</taxon>
        <taxon>Microcystaceae</taxon>
        <taxon>Microcystis</taxon>
    </lineage>
</organism>
<accession>B0JVG7</accession>
<evidence type="ECO:0000255" key="1">
    <source>
        <dbReference type="HAMAP-Rule" id="MF_00226"/>
    </source>
</evidence>
<feature type="chain" id="PRO_1000078180" description="CinA-like protein">
    <location>
        <begin position="1"/>
        <end position="417"/>
    </location>
</feature>
<dbReference type="EMBL" id="AP009552">
    <property type="protein sequence ID" value="BAG01501.1"/>
    <property type="molecule type" value="Genomic_DNA"/>
</dbReference>
<dbReference type="RefSeq" id="WP_012265014.1">
    <property type="nucleotide sequence ID" value="NC_010296.1"/>
</dbReference>
<dbReference type="SMR" id="B0JVG7"/>
<dbReference type="STRING" id="449447.MAE_16790"/>
<dbReference type="PaxDb" id="449447-MAE_16790"/>
<dbReference type="EnsemblBacteria" id="BAG01501">
    <property type="protein sequence ID" value="BAG01501"/>
    <property type="gene ID" value="MAE_16790"/>
</dbReference>
<dbReference type="KEGG" id="mar:MAE_16790"/>
<dbReference type="PATRIC" id="fig|449447.4.peg.1538"/>
<dbReference type="eggNOG" id="COG1058">
    <property type="taxonomic scope" value="Bacteria"/>
</dbReference>
<dbReference type="eggNOG" id="COG1546">
    <property type="taxonomic scope" value="Bacteria"/>
</dbReference>
<dbReference type="HOGENOM" id="CLU_030805_9_3_3"/>
<dbReference type="BioCyc" id="MAER449447:MAE_RS07375-MONOMER"/>
<dbReference type="Proteomes" id="UP000001510">
    <property type="component" value="Chromosome"/>
</dbReference>
<dbReference type="CDD" id="cd00885">
    <property type="entry name" value="cinA"/>
    <property type="match status" value="1"/>
</dbReference>
<dbReference type="Gene3D" id="3.30.70.2860">
    <property type="match status" value="1"/>
</dbReference>
<dbReference type="Gene3D" id="3.90.950.20">
    <property type="entry name" value="CinA-like"/>
    <property type="match status" value="1"/>
</dbReference>
<dbReference type="Gene3D" id="3.40.980.10">
    <property type="entry name" value="MoaB/Mog-like domain"/>
    <property type="match status" value="1"/>
</dbReference>
<dbReference type="HAMAP" id="MF_00226_B">
    <property type="entry name" value="CinA_B"/>
    <property type="match status" value="1"/>
</dbReference>
<dbReference type="InterPro" id="IPR050101">
    <property type="entry name" value="CinA"/>
</dbReference>
<dbReference type="InterPro" id="IPR036653">
    <property type="entry name" value="CinA-like_C"/>
</dbReference>
<dbReference type="InterPro" id="IPR008136">
    <property type="entry name" value="CinA_C"/>
</dbReference>
<dbReference type="InterPro" id="IPR041424">
    <property type="entry name" value="CinA_KH"/>
</dbReference>
<dbReference type="InterPro" id="IPR008135">
    <property type="entry name" value="Competence-induced_CinA"/>
</dbReference>
<dbReference type="InterPro" id="IPR036425">
    <property type="entry name" value="MoaB/Mog-like_dom_sf"/>
</dbReference>
<dbReference type="InterPro" id="IPR001453">
    <property type="entry name" value="MoaB/Mog_dom"/>
</dbReference>
<dbReference type="NCBIfam" id="TIGR00200">
    <property type="entry name" value="cinA_nterm"/>
    <property type="match status" value="1"/>
</dbReference>
<dbReference type="NCBIfam" id="TIGR00199">
    <property type="entry name" value="PncC_domain"/>
    <property type="match status" value="1"/>
</dbReference>
<dbReference type="NCBIfam" id="NF001813">
    <property type="entry name" value="PRK00549.1"/>
    <property type="match status" value="1"/>
</dbReference>
<dbReference type="PANTHER" id="PTHR13939">
    <property type="entry name" value="NICOTINAMIDE-NUCLEOTIDE AMIDOHYDROLASE PNCC"/>
    <property type="match status" value="1"/>
</dbReference>
<dbReference type="PANTHER" id="PTHR13939:SF0">
    <property type="entry name" value="NMN AMIDOHYDROLASE-LIKE PROTEIN YFAY"/>
    <property type="match status" value="1"/>
</dbReference>
<dbReference type="Pfam" id="PF02464">
    <property type="entry name" value="CinA"/>
    <property type="match status" value="1"/>
</dbReference>
<dbReference type="Pfam" id="PF18146">
    <property type="entry name" value="CinA_KH"/>
    <property type="match status" value="1"/>
</dbReference>
<dbReference type="Pfam" id="PF00994">
    <property type="entry name" value="MoCF_biosynth"/>
    <property type="match status" value="1"/>
</dbReference>
<dbReference type="PIRSF" id="PIRSF006728">
    <property type="entry name" value="CinA"/>
    <property type="match status" value="1"/>
</dbReference>
<dbReference type="SMART" id="SM00852">
    <property type="entry name" value="MoCF_biosynth"/>
    <property type="match status" value="1"/>
</dbReference>
<dbReference type="SUPFAM" id="SSF142433">
    <property type="entry name" value="CinA-like"/>
    <property type="match status" value="1"/>
</dbReference>
<dbReference type="SUPFAM" id="SSF53218">
    <property type="entry name" value="Molybdenum cofactor biosynthesis proteins"/>
    <property type="match status" value="1"/>
</dbReference>
<reference key="1">
    <citation type="journal article" date="2007" name="DNA Res.">
        <title>Complete genomic structure of the bloom-forming toxic cyanobacterium Microcystis aeruginosa NIES-843.</title>
        <authorList>
            <person name="Kaneko T."/>
            <person name="Nakajima N."/>
            <person name="Okamoto S."/>
            <person name="Suzuki I."/>
            <person name="Tanabe Y."/>
            <person name="Tamaoki M."/>
            <person name="Nakamura Y."/>
            <person name="Kasai F."/>
            <person name="Watanabe A."/>
            <person name="Kawashima K."/>
            <person name="Kishida Y."/>
            <person name="Ono A."/>
            <person name="Shimizu Y."/>
            <person name="Takahashi C."/>
            <person name="Minami C."/>
            <person name="Fujishiro T."/>
            <person name="Kohara M."/>
            <person name="Katoh M."/>
            <person name="Nakazaki N."/>
            <person name="Nakayama S."/>
            <person name="Yamada M."/>
            <person name="Tabata S."/>
            <person name="Watanabe M.M."/>
        </authorList>
    </citation>
    <scope>NUCLEOTIDE SEQUENCE [LARGE SCALE GENOMIC DNA]</scope>
    <source>
        <strain>NIES-843 / IAM M-247</strain>
    </source>
</reference>